<name>MTOX_ECO24</name>
<gene>
    <name evidence="1" type="primary">solA</name>
    <name type="ordered locus">EcE24377A_1182</name>
</gene>
<dbReference type="EC" id="1.5.3.-" evidence="1"/>
<dbReference type="EMBL" id="CP000800">
    <property type="protein sequence ID" value="ABV17200.1"/>
    <property type="molecule type" value="Genomic_DNA"/>
</dbReference>
<dbReference type="RefSeq" id="WP_000872809.1">
    <property type="nucleotide sequence ID" value="NC_009801.1"/>
</dbReference>
<dbReference type="SMR" id="A7ZKG4"/>
<dbReference type="KEGG" id="ecw:EcE24377A_1182"/>
<dbReference type="HOGENOM" id="CLU_007884_2_1_6"/>
<dbReference type="Proteomes" id="UP000001122">
    <property type="component" value="Chromosome"/>
</dbReference>
<dbReference type="GO" id="GO:0005829">
    <property type="term" value="C:cytosol"/>
    <property type="evidence" value="ECO:0007669"/>
    <property type="project" value="TreeGrafter"/>
</dbReference>
<dbReference type="GO" id="GO:0050660">
    <property type="term" value="F:flavin adenine dinucleotide binding"/>
    <property type="evidence" value="ECO:0007669"/>
    <property type="project" value="InterPro"/>
</dbReference>
<dbReference type="GO" id="GO:0050131">
    <property type="term" value="F:N-methyl-L-amino-acid oxidase activity"/>
    <property type="evidence" value="ECO:0007669"/>
    <property type="project" value="InterPro"/>
</dbReference>
<dbReference type="GO" id="GO:0008115">
    <property type="term" value="F:sarcosine oxidase activity"/>
    <property type="evidence" value="ECO:0007669"/>
    <property type="project" value="TreeGrafter"/>
</dbReference>
<dbReference type="Gene3D" id="3.30.9.10">
    <property type="entry name" value="D-Amino Acid Oxidase, subunit A, domain 2"/>
    <property type="match status" value="1"/>
</dbReference>
<dbReference type="Gene3D" id="3.50.50.60">
    <property type="entry name" value="FAD/NAD(P)-binding domain"/>
    <property type="match status" value="1"/>
</dbReference>
<dbReference type="HAMAP" id="MF_00515">
    <property type="entry name" value="MTOX"/>
    <property type="match status" value="1"/>
</dbReference>
<dbReference type="InterPro" id="IPR006076">
    <property type="entry name" value="FAD-dep_OxRdtase"/>
</dbReference>
<dbReference type="InterPro" id="IPR036188">
    <property type="entry name" value="FAD/NAD-bd_sf"/>
</dbReference>
<dbReference type="InterPro" id="IPR023493">
    <property type="entry name" value="Me_Trp_Oxase_MTOX"/>
</dbReference>
<dbReference type="InterPro" id="IPR045170">
    <property type="entry name" value="MTOX"/>
</dbReference>
<dbReference type="NCBIfam" id="NF008425">
    <property type="entry name" value="PRK11259.1"/>
    <property type="match status" value="1"/>
</dbReference>
<dbReference type="PANTHER" id="PTHR10961:SF7">
    <property type="entry name" value="FAD DEPENDENT OXIDOREDUCTASE DOMAIN-CONTAINING PROTEIN"/>
    <property type="match status" value="1"/>
</dbReference>
<dbReference type="PANTHER" id="PTHR10961">
    <property type="entry name" value="PEROXISOMAL SARCOSINE OXIDASE"/>
    <property type="match status" value="1"/>
</dbReference>
<dbReference type="Pfam" id="PF01266">
    <property type="entry name" value="DAO"/>
    <property type="match status" value="1"/>
</dbReference>
<dbReference type="SUPFAM" id="SSF54373">
    <property type="entry name" value="FAD-linked reductases, C-terminal domain"/>
    <property type="match status" value="1"/>
</dbReference>
<dbReference type="SUPFAM" id="SSF51905">
    <property type="entry name" value="FAD/NAD(P)-binding domain"/>
    <property type="match status" value="1"/>
</dbReference>
<organism>
    <name type="scientific">Escherichia coli O139:H28 (strain E24377A / ETEC)</name>
    <dbReference type="NCBI Taxonomy" id="331111"/>
    <lineage>
        <taxon>Bacteria</taxon>
        <taxon>Pseudomonadati</taxon>
        <taxon>Pseudomonadota</taxon>
        <taxon>Gammaproteobacteria</taxon>
        <taxon>Enterobacterales</taxon>
        <taxon>Enterobacteriaceae</taxon>
        <taxon>Escherichia</taxon>
    </lineage>
</organism>
<proteinExistence type="inferred from homology"/>
<keyword id="KW-0274">FAD</keyword>
<keyword id="KW-0285">Flavoprotein</keyword>
<keyword id="KW-0560">Oxidoreductase</keyword>
<keyword id="KW-1185">Reference proteome</keyword>
<sequence>MKYDLIIIGSGSVGAAAGYYATRAGLNVLMTDAHMPPHQHGSHHGDTRLIRHAYGEGEKYVPLVLRAQTLWDELSRHNEDDPIFVRSGVINLGPADSAFLANVAHSAEQWQLNVEKLDAQGIMARWPEIRVPDNYIGLFETDSGFLRSELAIKTWIQLAKEAGCAQLFNCPVTAIRHDDDGVTIETADGEYQAKKAIVCAGTWVKDLLPELPVQPVRKVFAWYQADGRYSVKNKFPAFTGELPNGDQYYGFPAENDALKIGKHNGGQVIHSADERVPFAEVVSDGSEAFPFLRNVLPGIGCCLYGAACTYDNSPDEDFIIDTLPDHDNTLFITGLSGHGFKFASVLGEIAADFAQDKKSDFDLTPFRLSRFQ</sequence>
<feature type="chain" id="PRO_1000060896" description="N-methyl-L-tryptophan oxidase">
    <location>
        <begin position="1"/>
        <end position="372"/>
    </location>
</feature>
<feature type="binding site" evidence="1">
    <location>
        <begin position="4"/>
        <end position="34"/>
    </location>
    <ligand>
        <name>FAD</name>
        <dbReference type="ChEBI" id="CHEBI:57692"/>
    </ligand>
</feature>
<feature type="modified residue" description="S-8alpha-FAD cysteine" evidence="1">
    <location>
        <position position="308"/>
    </location>
</feature>
<comment type="function">
    <text evidence="1">Catalyzes the oxidative demethylation of N-methyl-L-tryptophan.</text>
</comment>
<comment type="catalytic activity">
    <reaction evidence="1">
        <text>N(alpha)-methyl-L-tryptophan + O2 + H2O = L-tryptophan + formaldehyde + H2O2</text>
        <dbReference type="Rhea" id="RHEA:28006"/>
        <dbReference type="ChEBI" id="CHEBI:15377"/>
        <dbReference type="ChEBI" id="CHEBI:15379"/>
        <dbReference type="ChEBI" id="CHEBI:16240"/>
        <dbReference type="ChEBI" id="CHEBI:16842"/>
        <dbReference type="ChEBI" id="CHEBI:57283"/>
        <dbReference type="ChEBI" id="CHEBI:57912"/>
    </reaction>
</comment>
<comment type="cofactor">
    <cofactor evidence="1">
        <name>FAD</name>
        <dbReference type="ChEBI" id="CHEBI:57692"/>
    </cofactor>
    <text evidence="1">Binds 1 FAD per subunit.</text>
</comment>
<comment type="subunit">
    <text evidence="1">Monomer.</text>
</comment>
<comment type="similarity">
    <text evidence="1">Belongs to the MSOX/MTOX family. MTOX subfamily.</text>
</comment>
<protein>
    <recommendedName>
        <fullName evidence="1">N-methyl-L-tryptophan oxidase</fullName>
        <shortName evidence="1">MTOX</shortName>
        <ecNumber evidence="1">1.5.3.-</ecNumber>
    </recommendedName>
</protein>
<accession>A7ZKG4</accession>
<reference key="1">
    <citation type="journal article" date="2008" name="J. Bacteriol.">
        <title>The pangenome structure of Escherichia coli: comparative genomic analysis of E. coli commensal and pathogenic isolates.</title>
        <authorList>
            <person name="Rasko D.A."/>
            <person name="Rosovitz M.J."/>
            <person name="Myers G.S.A."/>
            <person name="Mongodin E.F."/>
            <person name="Fricke W.F."/>
            <person name="Gajer P."/>
            <person name="Crabtree J."/>
            <person name="Sebaihia M."/>
            <person name="Thomson N.R."/>
            <person name="Chaudhuri R."/>
            <person name="Henderson I.R."/>
            <person name="Sperandio V."/>
            <person name="Ravel J."/>
        </authorList>
    </citation>
    <scope>NUCLEOTIDE SEQUENCE [LARGE SCALE GENOMIC DNA]</scope>
    <source>
        <strain>E24377A / ETEC</strain>
    </source>
</reference>
<evidence type="ECO:0000255" key="1">
    <source>
        <dbReference type="HAMAP-Rule" id="MF_00515"/>
    </source>
</evidence>